<dbReference type="EMBL" id="FM178379">
    <property type="protein sequence ID" value="CAQ80475.1"/>
    <property type="molecule type" value="Genomic_DNA"/>
</dbReference>
<dbReference type="RefSeq" id="WP_012551227.1">
    <property type="nucleotide sequence ID" value="NC_011312.1"/>
</dbReference>
<dbReference type="SMR" id="B6EMS1"/>
<dbReference type="KEGG" id="vsa:VSAL_I2791"/>
<dbReference type="eggNOG" id="COG3080">
    <property type="taxonomic scope" value="Bacteria"/>
</dbReference>
<dbReference type="HOGENOM" id="CLU_168367_0_0_6"/>
<dbReference type="Proteomes" id="UP000001730">
    <property type="component" value="Chromosome 1"/>
</dbReference>
<dbReference type="GO" id="GO:0045283">
    <property type="term" value="C:fumarate reductase complex"/>
    <property type="evidence" value="ECO:0007669"/>
    <property type="project" value="UniProtKB-UniRule"/>
</dbReference>
<dbReference type="GO" id="GO:0005886">
    <property type="term" value="C:plasma membrane"/>
    <property type="evidence" value="ECO:0007669"/>
    <property type="project" value="UniProtKB-SubCell"/>
</dbReference>
<dbReference type="GO" id="GO:0000104">
    <property type="term" value="F:succinate dehydrogenase activity"/>
    <property type="evidence" value="ECO:0007669"/>
    <property type="project" value="UniProtKB-UniRule"/>
</dbReference>
<dbReference type="GO" id="GO:0006106">
    <property type="term" value="P:fumarate metabolic process"/>
    <property type="evidence" value="ECO:0007669"/>
    <property type="project" value="InterPro"/>
</dbReference>
<dbReference type="CDD" id="cd00547">
    <property type="entry name" value="QFR_TypeD_subunitD"/>
    <property type="match status" value="1"/>
</dbReference>
<dbReference type="Gene3D" id="1.20.1300.10">
    <property type="entry name" value="Fumarate reductase/succinate dehydrogenase, transmembrane subunit"/>
    <property type="match status" value="1"/>
</dbReference>
<dbReference type="HAMAP" id="MF_00709">
    <property type="entry name" value="Fumarate_red_D"/>
    <property type="match status" value="1"/>
</dbReference>
<dbReference type="InterPro" id="IPR003418">
    <property type="entry name" value="Fumarate_red_D"/>
</dbReference>
<dbReference type="InterPro" id="IPR034804">
    <property type="entry name" value="SQR/QFR_C/D"/>
</dbReference>
<dbReference type="NCBIfam" id="NF003977">
    <property type="entry name" value="PRK05470.1-1"/>
    <property type="match status" value="1"/>
</dbReference>
<dbReference type="Pfam" id="PF02313">
    <property type="entry name" value="Fumarate_red_D"/>
    <property type="match status" value="1"/>
</dbReference>
<dbReference type="PIRSF" id="PIRSF000179">
    <property type="entry name" value="FrdD"/>
    <property type="match status" value="1"/>
</dbReference>
<dbReference type="SUPFAM" id="SSF81343">
    <property type="entry name" value="Fumarate reductase respiratory complex transmembrane subunits"/>
    <property type="match status" value="1"/>
</dbReference>
<proteinExistence type="inferred from homology"/>
<protein>
    <recommendedName>
        <fullName evidence="1">Fumarate reductase subunit D</fullName>
    </recommendedName>
    <alternativeName>
        <fullName evidence="1">Quinol-fumarate reductase subunit D</fullName>
        <shortName evidence="1">QFR subunit D</shortName>
    </alternativeName>
</protein>
<comment type="function">
    <text evidence="1">Anchors the catalytic components of the fumarate reductase complex to the cell membrane, binds quinones.</text>
</comment>
<comment type="subunit">
    <text evidence="1">Part of an enzyme complex containing four subunits: a flavoprotein (FrdA), an iron-sulfur protein (FrdB), and two hydrophobic anchor proteins (FrdC and FrdD).</text>
</comment>
<comment type="subcellular location">
    <subcellularLocation>
        <location evidence="1">Cell inner membrane</location>
        <topology evidence="1">Multi-pass membrane protein</topology>
    </subcellularLocation>
</comment>
<comment type="similarity">
    <text evidence="1">Belongs to the FrdD family.</text>
</comment>
<evidence type="ECO:0000255" key="1">
    <source>
        <dbReference type="HAMAP-Rule" id="MF_00709"/>
    </source>
</evidence>
<name>FRDD_ALISL</name>
<keyword id="KW-0997">Cell inner membrane</keyword>
<keyword id="KW-1003">Cell membrane</keyword>
<keyword id="KW-0472">Membrane</keyword>
<keyword id="KW-0812">Transmembrane</keyword>
<keyword id="KW-1133">Transmembrane helix</keyword>
<organism>
    <name type="scientific">Aliivibrio salmonicida (strain LFI1238)</name>
    <name type="common">Vibrio salmonicida (strain LFI1238)</name>
    <dbReference type="NCBI Taxonomy" id="316275"/>
    <lineage>
        <taxon>Bacteria</taxon>
        <taxon>Pseudomonadati</taxon>
        <taxon>Pseudomonadota</taxon>
        <taxon>Gammaproteobacteria</taxon>
        <taxon>Vibrionales</taxon>
        <taxon>Vibrionaceae</taxon>
        <taxon>Aliivibrio</taxon>
    </lineage>
</organism>
<reference key="1">
    <citation type="journal article" date="2008" name="BMC Genomics">
        <title>The genome sequence of the fish pathogen Aliivibrio salmonicida strain LFI1238 shows extensive evidence of gene decay.</title>
        <authorList>
            <person name="Hjerde E."/>
            <person name="Lorentzen M.S."/>
            <person name="Holden M.T."/>
            <person name="Seeger K."/>
            <person name="Paulsen S."/>
            <person name="Bason N."/>
            <person name="Churcher C."/>
            <person name="Harris D."/>
            <person name="Norbertczak H."/>
            <person name="Quail M.A."/>
            <person name="Sanders S."/>
            <person name="Thurston S."/>
            <person name="Parkhill J."/>
            <person name="Willassen N.P."/>
            <person name="Thomson N.R."/>
        </authorList>
    </citation>
    <scope>NUCLEOTIDE SEQUENCE [LARGE SCALE GENOMIC DNA]</scope>
    <source>
        <strain>LFI1238</strain>
    </source>
</reference>
<accession>B6EMS1</accession>
<feature type="chain" id="PRO_1000132395" description="Fumarate reductase subunit D">
    <location>
        <begin position="1"/>
        <end position="120"/>
    </location>
</feature>
<feature type="transmembrane region" description="Helical" evidence="1">
    <location>
        <begin position="25"/>
        <end position="45"/>
    </location>
</feature>
<feature type="transmembrane region" description="Helical" evidence="1">
    <location>
        <begin position="55"/>
        <end position="75"/>
    </location>
</feature>
<feature type="transmembrane region" description="Helical" evidence="1">
    <location>
        <begin position="100"/>
        <end position="120"/>
    </location>
</feature>
<gene>
    <name evidence="1" type="primary">frdD</name>
    <name type="ordered locus">VSAL_I2791</name>
</gene>
<sequence>MVNLNPKRSDEPVWWGLFGAGGTWFAMLTPVTILVLGILVPLGVIGPESMNYLRVAGFVTSIIGALFVIGSISMPMWHAMHRVHHGMHDLKFHTGTAGKIACYATAALATVLSIVFIFMI</sequence>